<comment type="function">
    <text evidence="1">Assembles around the rod to form the L-ring and probably protects the motor/basal body from shearing forces during rotation.</text>
</comment>
<comment type="subunit">
    <text evidence="1">The basal body constitutes a major portion of the flagellar organelle and consists of four rings (L,P,S, and M) mounted on a central rod.</text>
</comment>
<comment type="subcellular location">
    <subcellularLocation>
        <location evidence="1">Cell outer membrane</location>
        <topology evidence="1">Lipid-anchor</topology>
    </subcellularLocation>
    <subcellularLocation>
        <location evidence="1">Bacterial flagellum basal body</location>
    </subcellularLocation>
</comment>
<comment type="similarity">
    <text evidence="1">Belongs to the FlgH family.</text>
</comment>
<keyword id="KW-0975">Bacterial flagellum</keyword>
<keyword id="KW-0998">Cell outer membrane</keyword>
<keyword id="KW-0449">Lipoprotein</keyword>
<keyword id="KW-0472">Membrane</keyword>
<keyword id="KW-0564">Palmitate</keyword>
<keyword id="KW-1185">Reference proteome</keyword>
<keyword id="KW-0732">Signal</keyword>
<organism>
    <name type="scientific">Chromobacterium violaceum (strain ATCC 12472 / DSM 30191 / JCM 1249 / CCUG 213 / NBRC 12614 / NCIMB 9131 / NCTC 9757 / MK)</name>
    <dbReference type="NCBI Taxonomy" id="243365"/>
    <lineage>
        <taxon>Bacteria</taxon>
        <taxon>Pseudomonadati</taxon>
        <taxon>Pseudomonadota</taxon>
        <taxon>Betaproteobacteria</taxon>
        <taxon>Neisseriales</taxon>
        <taxon>Chromobacteriaceae</taxon>
        <taxon>Chromobacterium</taxon>
    </lineage>
</organism>
<proteinExistence type="inferred from homology"/>
<accession>Q7NXC0</accession>
<feature type="signal peptide" evidence="1">
    <location>
        <begin position="1"/>
        <end position="16"/>
    </location>
</feature>
<feature type="chain" id="PRO_0000009439" description="Flagellar L-ring protein 1">
    <location>
        <begin position="17"/>
        <end position="217"/>
    </location>
</feature>
<feature type="lipid moiety-binding region" description="N-palmitoyl cysteine" evidence="1">
    <location>
        <position position="17"/>
    </location>
</feature>
<feature type="lipid moiety-binding region" description="S-diacylglycerol cysteine" evidence="1">
    <location>
        <position position="17"/>
    </location>
</feature>
<name>FLGH1_CHRVO</name>
<sequence length="217" mass="22796">MTLARLAPLAALLLAACAQFQPPPPEPDPLPDLMRQQTSLPQGGGVFTAGGSLSLTSDNRAFRPGDVLTVVLEETTQASKQAGTSFGKKSGAKIGPSLIGNTTFNAQVGIDANRDFNGSSSSTQQNALAGSLTVVVHRVLPNGLLQVKGEKQLTLNQGEEMLRVAGYVRVEDIDTDNRVSSLRIANARIGYSGSGALADANSPGWLMRFFASPLMPF</sequence>
<evidence type="ECO:0000255" key="1">
    <source>
        <dbReference type="HAMAP-Rule" id="MF_00415"/>
    </source>
</evidence>
<reference key="1">
    <citation type="journal article" date="2003" name="Proc. Natl. Acad. Sci. U.S.A.">
        <title>The complete genome sequence of Chromobacterium violaceum reveals remarkable and exploitable bacterial adaptability.</title>
        <authorList>
            <person name="Vasconcelos A.T.R."/>
            <person name="de Almeida D.F."/>
            <person name="Hungria M."/>
            <person name="Guimaraes C.T."/>
            <person name="Antonio R.V."/>
            <person name="Almeida F.C."/>
            <person name="de Almeida L.G.P."/>
            <person name="de Almeida R."/>
            <person name="Alves-Gomes J.A."/>
            <person name="Andrade E.M."/>
            <person name="Araripe J."/>
            <person name="de Araujo M.F.F."/>
            <person name="Astolfi-Filho S."/>
            <person name="Azevedo V."/>
            <person name="Baptista A.J."/>
            <person name="Bataus L.A.M."/>
            <person name="Batista J.S."/>
            <person name="Belo A."/>
            <person name="van den Berg C."/>
            <person name="Bogo M."/>
            <person name="Bonatto S."/>
            <person name="Bordignon J."/>
            <person name="Brigido M.M."/>
            <person name="Brito C.A."/>
            <person name="Brocchi M."/>
            <person name="Burity H.A."/>
            <person name="Camargo A.A."/>
            <person name="Cardoso D.D.P."/>
            <person name="Carneiro N.P."/>
            <person name="Carraro D.M."/>
            <person name="Carvalho C.M.B."/>
            <person name="Cascardo J.C.M."/>
            <person name="Cavada B.S."/>
            <person name="Chueire L.M.O."/>
            <person name="Creczynski-Pasa T.B."/>
            <person name="Cunha-Junior N.C."/>
            <person name="Fagundes N."/>
            <person name="Falcao C.L."/>
            <person name="Fantinatti F."/>
            <person name="Farias I.P."/>
            <person name="Felipe M.S.S."/>
            <person name="Ferrari L.P."/>
            <person name="Ferro J.A."/>
            <person name="Ferro M.I.T."/>
            <person name="Franco G.R."/>
            <person name="Freitas N.S.A."/>
            <person name="Furlan L.R."/>
            <person name="Gazzinelli R.T."/>
            <person name="Gomes E.A."/>
            <person name="Goncalves P.R."/>
            <person name="Grangeiro T.B."/>
            <person name="Grattapaglia D."/>
            <person name="Grisard E.C."/>
            <person name="Hanna E.S."/>
            <person name="Jardim S.N."/>
            <person name="Laurino J."/>
            <person name="Leoi L.C.T."/>
            <person name="Lima L.F.A."/>
            <person name="Loureiro M.F."/>
            <person name="Lyra M.C.C.P."/>
            <person name="Madeira H.M.F."/>
            <person name="Manfio G.P."/>
            <person name="Maranhao A.Q."/>
            <person name="Martins W.S."/>
            <person name="di Mauro S.M.Z."/>
            <person name="de Medeiros S.R.B."/>
            <person name="Meissner R.V."/>
            <person name="Moreira M.A.M."/>
            <person name="Nascimento F.F."/>
            <person name="Nicolas M.F."/>
            <person name="Oliveira J.G."/>
            <person name="Oliveira S.C."/>
            <person name="Paixao R.F.C."/>
            <person name="Parente J.A."/>
            <person name="Pedrosa F.O."/>
            <person name="Pena S.D.J."/>
            <person name="Pereira J.O."/>
            <person name="Pereira M."/>
            <person name="Pinto L.S.R.C."/>
            <person name="Pinto L.S."/>
            <person name="Porto J.I.R."/>
            <person name="Potrich D.P."/>
            <person name="Ramalho-Neto C.E."/>
            <person name="Reis A.M.M."/>
            <person name="Rigo L.U."/>
            <person name="Rondinelli E."/>
            <person name="Santos E.B.P."/>
            <person name="Santos F.R."/>
            <person name="Schneider M.P.C."/>
            <person name="Seuanez H.N."/>
            <person name="Silva A.M.R."/>
            <person name="da Silva A.L.C."/>
            <person name="Silva D.W."/>
            <person name="Silva R."/>
            <person name="Simoes I.C."/>
            <person name="Simon D."/>
            <person name="Soares C.M.A."/>
            <person name="Soares R.B.A."/>
            <person name="Souza E.M."/>
            <person name="Souza K.R.L."/>
            <person name="Souza R.C."/>
            <person name="Steffens M.B.R."/>
            <person name="Steindel M."/>
            <person name="Teixeira S.R."/>
            <person name="Urmenyi T."/>
            <person name="Vettore A."/>
            <person name="Wassem R."/>
            <person name="Zaha A."/>
            <person name="Simpson A.J.G."/>
        </authorList>
    </citation>
    <scope>NUCLEOTIDE SEQUENCE [LARGE SCALE GENOMIC DNA]</scope>
    <source>
        <strain>ATCC 12472 / DSM 30191 / JCM 1249 / CCUG 213 / NBRC 12614 / NCIMB 9131 / NCTC 9757 / MK</strain>
    </source>
</reference>
<dbReference type="EMBL" id="AE016825">
    <property type="protein sequence ID" value="AAQ59382.1"/>
    <property type="molecule type" value="Genomic_DNA"/>
</dbReference>
<dbReference type="RefSeq" id="WP_011135259.1">
    <property type="nucleotide sequence ID" value="NC_005085.1"/>
</dbReference>
<dbReference type="SMR" id="Q7NXC0"/>
<dbReference type="STRING" id="243365.CV_1707"/>
<dbReference type="DNASU" id="2551237"/>
<dbReference type="KEGG" id="cvi:CV_1707"/>
<dbReference type="eggNOG" id="COG2063">
    <property type="taxonomic scope" value="Bacteria"/>
</dbReference>
<dbReference type="HOGENOM" id="CLU_069313_0_2_4"/>
<dbReference type="OrthoDB" id="9789463at2"/>
<dbReference type="Proteomes" id="UP000001424">
    <property type="component" value="Chromosome"/>
</dbReference>
<dbReference type="GO" id="GO:0009427">
    <property type="term" value="C:bacterial-type flagellum basal body, distal rod, L ring"/>
    <property type="evidence" value="ECO:0007669"/>
    <property type="project" value="InterPro"/>
</dbReference>
<dbReference type="GO" id="GO:0009279">
    <property type="term" value="C:cell outer membrane"/>
    <property type="evidence" value="ECO:0007669"/>
    <property type="project" value="UniProtKB-SubCell"/>
</dbReference>
<dbReference type="GO" id="GO:0003774">
    <property type="term" value="F:cytoskeletal motor activity"/>
    <property type="evidence" value="ECO:0007669"/>
    <property type="project" value="InterPro"/>
</dbReference>
<dbReference type="GO" id="GO:0071973">
    <property type="term" value="P:bacterial-type flagellum-dependent cell motility"/>
    <property type="evidence" value="ECO:0007669"/>
    <property type="project" value="InterPro"/>
</dbReference>
<dbReference type="HAMAP" id="MF_00415">
    <property type="entry name" value="FlgH"/>
    <property type="match status" value="1"/>
</dbReference>
<dbReference type="InterPro" id="IPR000527">
    <property type="entry name" value="Flag_Lring"/>
</dbReference>
<dbReference type="NCBIfam" id="NF001304">
    <property type="entry name" value="PRK00249.1-4"/>
    <property type="match status" value="1"/>
</dbReference>
<dbReference type="PANTHER" id="PTHR34933">
    <property type="entry name" value="FLAGELLAR L-RING PROTEIN"/>
    <property type="match status" value="1"/>
</dbReference>
<dbReference type="PANTHER" id="PTHR34933:SF1">
    <property type="entry name" value="FLAGELLAR L-RING PROTEIN"/>
    <property type="match status" value="1"/>
</dbReference>
<dbReference type="Pfam" id="PF02107">
    <property type="entry name" value="FlgH"/>
    <property type="match status" value="1"/>
</dbReference>
<dbReference type="PRINTS" id="PR01008">
    <property type="entry name" value="FLGLRINGFLGH"/>
</dbReference>
<dbReference type="PROSITE" id="PS51257">
    <property type="entry name" value="PROKAR_LIPOPROTEIN"/>
    <property type="match status" value="1"/>
</dbReference>
<gene>
    <name evidence="1" type="primary">flgH1</name>
    <name type="ordered locus">CV_1707</name>
</gene>
<protein>
    <recommendedName>
        <fullName evidence="1">Flagellar L-ring protein 1</fullName>
    </recommendedName>
    <alternativeName>
        <fullName evidence="1">Basal body L-ring protein 1</fullName>
    </alternativeName>
</protein>